<evidence type="ECO:0000255" key="1"/>
<evidence type="ECO:0000269" key="2">
    <source>
    </source>
</evidence>
<evidence type="ECO:0000303" key="3">
    <source>
    </source>
</evidence>
<evidence type="ECO:0000305" key="4"/>
<evidence type="ECO:0000305" key="5">
    <source>
    </source>
</evidence>
<evidence type="ECO:0000305" key="6">
    <source>
    </source>
</evidence>
<accession>D0NMF4</accession>
<name>RXLRN_PHYIT</name>
<reference key="1">
    <citation type="journal article" date="2009" name="Nature">
        <title>Genome sequence and analysis of the Irish potato famine pathogen Phytophthora infestans.</title>
        <authorList>
            <consortium name="The Broad Institute Genome Sequencing Platform"/>
            <person name="Haas B.J."/>
            <person name="Kamoun S."/>
            <person name="Zody M.C."/>
            <person name="Jiang R.H."/>
            <person name="Handsaker R.E."/>
            <person name="Cano L.M."/>
            <person name="Grabherr M."/>
            <person name="Kodira C.D."/>
            <person name="Raffaele S."/>
            <person name="Torto-Alalibo T."/>
            <person name="Bozkurt T.O."/>
            <person name="Ah-Fong A.M."/>
            <person name="Alvarado L."/>
            <person name="Anderson V.L."/>
            <person name="Armstrong M.R."/>
            <person name="Avrova A."/>
            <person name="Baxter L."/>
            <person name="Beynon J."/>
            <person name="Boevink P.C."/>
            <person name="Bollmann S.R."/>
            <person name="Bos J.I."/>
            <person name="Bulone V."/>
            <person name="Cai G."/>
            <person name="Cakir C."/>
            <person name="Carrington J.C."/>
            <person name="Chawner M."/>
            <person name="Conti L."/>
            <person name="Costanzo S."/>
            <person name="Ewan R."/>
            <person name="Fahlgren N."/>
            <person name="Fischbach M.A."/>
            <person name="Fugelstad J."/>
            <person name="Gilroy E.M."/>
            <person name="Gnerre S."/>
            <person name="Green P.J."/>
            <person name="Grenville-Briggs L.J."/>
            <person name="Griffith J."/>
            <person name="Grunwald N.J."/>
            <person name="Horn K."/>
            <person name="Horner N.R."/>
            <person name="Hu C.H."/>
            <person name="Huitema E."/>
            <person name="Jeong D.H."/>
            <person name="Jones A.M."/>
            <person name="Jones J.D."/>
            <person name="Jones R.W."/>
            <person name="Karlsson E.K."/>
            <person name="Kunjeti S.G."/>
            <person name="Lamour K."/>
            <person name="Liu Z."/>
            <person name="Ma L."/>
            <person name="Maclean D."/>
            <person name="Chibucos M.C."/>
            <person name="McDonald H."/>
            <person name="McWalters J."/>
            <person name="Meijer H.J."/>
            <person name="Morgan W."/>
            <person name="Morris P.F."/>
            <person name="Munro C.A."/>
            <person name="O'Neill K."/>
            <person name="Ospina-Giraldo M."/>
            <person name="Pinzon A."/>
            <person name="Pritchard L."/>
            <person name="Ramsahoye B."/>
            <person name="Ren Q."/>
            <person name="Restrepo S."/>
            <person name="Roy S."/>
            <person name="Sadanandom A."/>
            <person name="Savidor A."/>
            <person name="Schornack S."/>
            <person name="Schwartz D.C."/>
            <person name="Schumann U.D."/>
            <person name="Schwessinger B."/>
            <person name="Seyer L."/>
            <person name="Sharpe T."/>
            <person name="Silvar C."/>
            <person name="Song J."/>
            <person name="Studholme D.J."/>
            <person name="Sykes S."/>
            <person name="Thines M."/>
            <person name="van de Vondervoort P.J."/>
            <person name="Phuntumart V."/>
            <person name="Wawra S."/>
            <person name="Weide R."/>
            <person name="Win J."/>
            <person name="Young C."/>
            <person name="Zhou S."/>
            <person name="Fry W."/>
            <person name="Meyers B.C."/>
            <person name="van West P."/>
            <person name="Ristaino J."/>
            <person name="Govers F."/>
            <person name="Birch P.R."/>
            <person name="Whisson S.C."/>
            <person name="Judelson H.S."/>
            <person name="Nusbaum C."/>
        </authorList>
    </citation>
    <scope>NUCLEOTIDE SEQUENCE [LARGE SCALE GENOMIC DNA]</scope>
    <source>
        <strain>T30-4</strain>
    </source>
</reference>
<reference key="2">
    <citation type="journal article" date="2019" name="J. Exp. Bot.">
        <title>Phytophthora infestans RXLR effectors act in concert at diverse subcellular locations to enhance host colonization.</title>
        <authorList>
            <person name="Wang S."/>
            <person name="McLellan H."/>
            <person name="Bukharova T."/>
            <person name="He Q."/>
            <person name="Murphy F."/>
            <person name="Shi J."/>
            <person name="Sun S."/>
            <person name="van Weymers P."/>
            <person name="Ren Y."/>
            <person name="Thilliez G."/>
            <person name="Wang H."/>
            <person name="Chen X."/>
            <person name="Engelhardt S."/>
            <person name="Vleeshouwers V."/>
            <person name="Gilroy E.M."/>
            <person name="Whisson S.C."/>
            <person name="Hein I."/>
            <person name="Wang X."/>
            <person name="Tian Z."/>
            <person name="Birch P.R.J."/>
            <person name="Boevink P.C."/>
        </authorList>
    </citation>
    <scope>FUNCTION</scope>
    <scope>SUBCELLULAR LOCATION</scope>
    <scope>DOMAIN</scope>
</reference>
<gene>
    <name type="ORF">PITG_13625</name>
</gene>
<organism>
    <name type="scientific">Phytophthora infestans (strain T30-4)</name>
    <name type="common">Potato late blight agent</name>
    <dbReference type="NCBI Taxonomy" id="403677"/>
    <lineage>
        <taxon>Eukaryota</taxon>
        <taxon>Sar</taxon>
        <taxon>Stramenopiles</taxon>
        <taxon>Oomycota</taxon>
        <taxon>Peronosporales</taxon>
        <taxon>Peronosporaceae</taxon>
        <taxon>Phytophthora</taxon>
    </lineage>
</organism>
<protein>
    <recommendedName>
        <fullName evidence="3">RxLR effector protein PITG_13625</fullName>
    </recommendedName>
</protein>
<dbReference type="EMBL" id="DS028146">
    <property type="protein sequence ID" value="EEY60875.1"/>
    <property type="molecule type" value="Genomic_DNA"/>
</dbReference>
<dbReference type="RefSeq" id="XP_002899821.1">
    <property type="nucleotide sequence ID" value="XM_002899775.1"/>
</dbReference>
<dbReference type="EnsemblProtists" id="PITG_13625T0">
    <property type="protein sequence ID" value="PITG_13625T0"/>
    <property type="gene ID" value="PITG_13625"/>
</dbReference>
<dbReference type="GeneID" id="9462259"/>
<dbReference type="KEGG" id="pif:PITG_13625"/>
<dbReference type="VEuPathDB" id="FungiDB:PITG_13625"/>
<dbReference type="eggNOG" id="ENOG502S8AJ">
    <property type="taxonomic scope" value="Eukaryota"/>
</dbReference>
<dbReference type="HOGENOM" id="CLU_125241_0_0_1"/>
<dbReference type="InParanoid" id="D0NMF4"/>
<dbReference type="OMA" id="QELACPH"/>
<dbReference type="OrthoDB" id="164912at2759"/>
<dbReference type="Proteomes" id="UP000006643">
    <property type="component" value="Partially assembled WGS sequence"/>
</dbReference>
<dbReference type="GO" id="GO:0005576">
    <property type="term" value="C:extracellular region"/>
    <property type="evidence" value="ECO:0007669"/>
    <property type="project" value="UniProtKB-SubCell"/>
</dbReference>
<dbReference type="GO" id="GO:0020002">
    <property type="term" value="C:host cell plasma membrane"/>
    <property type="evidence" value="ECO:0007669"/>
    <property type="project" value="UniProtKB-SubCell"/>
</dbReference>
<dbReference type="GO" id="GO:0016020">
    <property type="term" value="C:membrane"/>
    <property type="evidence" value="ECO:0007669"/>
    <property type="project" value="UniProtKB-KW"/>
</dbReference>
<feature type="signal peptide" evidence="1">
    <location>
        <begin position="1"/>
        <end position="23"/>
    </location>
</feature>
<feature type="chain" id="PRO_5003012870" description="RxLR effector protein PITG_13625">
    <location>
        <begin position="24"/>
        <end position="163"/>
    </location>
</feature>
<feature type="short sequence motif" description="RxLR-dEER" evidence="5">
    <location>
        <begin position="37"/>
        <end position="52"/>
    </location>
</feature>
<comment type="function">
    <text evidence="2">Effector that enhances P.infestans colonization of Nicotiana benthamiana leaves.</text>
</comment>
<comment type="subcellular location">
    <subcellularLocation>
        <location evidence="2">Secreted</location>
    </subcellularLocation>
    <subcellularLocation>
        <location evidence="2">Host cell membrane</location>
    </subcellularLocation>
</comment>
<comment type="domain">
    <text evidence="6">The RxLR-dEER motif acts to carry the protein into the host cell cytoplasm through binding to cell surface phosphatidylinositol-3-phosphate.</text>
</comment>
<comment type="similarity">
    <text evidence="4">Belongs to the RxLR effector family.</text>
</comment>
<proteinExistence type="inferred from homology"/>
<keyword id="KW-1032">Host cell membrane</keyword>
<keyword id="KW-1043">Host membrane</keyword>
<keyword id="KW-0472">Membrane</keyword>
<keyword id="KW-1185">Reference proteome</keyword>
<keyword id="KW-0964">Secreted</keyword>
<keyword id="KW-0732">Signal</keyword>
<keyword id="KW-0843">Virulence</keyword>
<sequence length="163" mass="17780">MKVSKAIVALAALCMALLAPAAGSKELTNIDGDLNNRHLRQESAELATTPEEIGVKKDSNNPLQRRDQALVSAHRVYDPVSGLACALVGDCMACPTSEKDETFCRETGYRQELDCPRPKDPKDAALLTKPEDEREIRFKACSPADTARPGVEVVKFEVRNVLS</sequence>